<reference key="1">
    <citation type="journal article" date="1988" name="Proc. Natl. Acad. Sci. U.S.A.">
        <title>Structure of the coding sequence and primary amino acid sequence of acetyl-coenzyme A carboxylase.</title>
        <authorList>
            <person name="Lopez-Casillas F."/>
            <person name="Bai D.-H."/>
            <person name="Luo X."/>
            <person name="Kong I.-S."/>
            <person name="Hermodson M.A."/>
            <person name="Kim K.-H."/>
        </authorList>
    </citation>
    <scope>NUCLEOTIDE SEQUENCE [MRNA] (ISOFORM 1)</scope>
</reference>
<reference key="2">
    <citation type="journal article" date="1989" name="Proc. Natl. Acad. Sci. U.S.A.">
        <title>Structural features of the acetyl-CoA carboxylase gene: mechanisms for the generation of mRNAs with 5' end heterogeneity.</title>
        <authorList>
            <person name="Luo X.N."/>
            <person name="Park K."/>
            <person name="Lopez-Casillas F."/>
            <person name="Kim K.-H."/>
        </authorList>
    </citation>
    <scope>NUCLEOTIDE SEQUENCE [GENOMIC DNA]</scope>
</reference>
<reference key="3">
    <citation type="journal article" date="2007" name="Genomics">
        <title>Fine-mapping and comprehensive transcript analysis reveals nonsynonymous variants within a novel 1.17 Mb blood pressure QTL region on rat chromosome 10.</title>
        <authorList>
            <person name="Saad Y."/>
            <person name="Garrett M.R."/>
            <person name="Manickavasagam E."/>
            <person name="Yerga-Woolwine S."/>
            <person name="Farms P."/>
            <person name="Radecki T."/>
            <person name="Joe B."/>
        </authorList>
    </citation>
    <scope>NUCLEOTIDE SEQUENCE [MRNA] (ISOFORM 1)</scope>
    <source>
        <strain>Dahl salt-sensitive</strain>
        <strain>Lewis</strain>
    </source>
</reference>
<reference key="4">
    <citation type="journal article" date="1989" name="J. Biol. Chem.">
        <title>Heterogeneity at the 5' end of rat acetyl-coenzyme A carboxylase mRNA. Lipogenic conditions enhance synthesis of a unique mRNA in liver.</title>
        <authorList>
            <person name="Lopez-Casillas F."/>
            <person name="Kim K.-H."/>
        </authorList>
    </citation>
    <scope>NUCLEOTIDE SEQUENCE [MRNA] OF 1-33</scope>
</reference>
<reference key="5">
    <citation type="journal article" date="1988" name="Eur. J. Biochem.">
        <title>Identification by amino acid sequencing of three major regulatory phosphorylation sites on rat acetyl-CoA carboxylase.</title>
        <authorList>
            <person name="Munday M.R."/>
            <person name="Campbell D.G."/>
            <person name="Carling D."/>
            <person name="Hardie D.G."/>
        </authorList>
    </citation>
    <scope>PROTEIN SEQUENCE OF 76-85 AND 1198-1201</scope>
    <scope>PHOSPHORYLATION AT SER-77; SER-79 AND SER-1200</scope>
</reference>
<reference key="6">
    <citation type="journal article" date="1990" name="J. Biol. Chem.">
        <title>Acetyl-CoA carboxylase mRNA species with or without inhibitory coding sequence for Ser-1200 phosphorylation.</title>
        <authorList>
            <person name="Kong I.-S."/>
            <person name="Lopez-Casillas F."/>
            <person name="Kim K.-H."/>
        </authorList>
    </citation>
    <scope>NUCLEOTIDE SEQUENCE [MRNA] OF 1167-1200 (ISOFORMS 1 AND 2)</scope>
    <scope>PHOSPHORYLATION AT SER-1200</scope>
</reference>
<reference key="7">
    <citation type="journal article" date="1994" name="J. Biol. Chem.">
        <title>Unique structural features and differential phosphorylation of the 280-kDa component (isozyme) of rat liver acetyl-CoA carboxylase.</title>
        <authorList>
            <person name="Winz R."/>
            <person name="Hess D."/>
            <person name="Aebersold R."/>
            <person name="Brownsey R.W."/>
        </authorList>
    </citation>
    <scope>PARTIAL PROTEIN SEQUENCE</scope>
    <scope>IDENTIFICATION BY MASS SPECTROMETRY</scope>
    <source>
        <strain>Wistar</strain>
        <tissue>Liver</tissue>
    </source>
</reference>
<reference key="8">
    <citation type="journal article" date="1989" name="Eur. J. Biochem.">
        <title>Analysis of the biotin-binding site on acetyl-CoA carboxylase from rat.</title>
        <authorList>
            <person name="Bai D.-H."/>
            <person name="Moon T.-W."/>
            <person name="Lopez-Casillas F."/>
            <person name="Andrews P.C."/>
            <person name="Kim K.-H."/>
        </authorList>
    </citation>
    <scope>BIOTINYLATION AT LYS-785</scope>
    <scope>COFACTOR</scope>
</reference>
<reference key="9">
    <citation type="journal article" date="1992" name="Eur. J. Biochem.">
        <title>Diurnal rhythm of phosphorylation of rat liver acetyl-CoA carboxylase by the AMP-activated protein kinase, demonstrated using freeze-clamping. Effects of high fat diets.</title>
        <authorList>
            <person name="Davies S.P."/>
            <person name="Carling D."/>
            <person name="Munday M.R."/>
            <person name="Hardie D.G."/>
        </authorList>
    </citation>
    <scope>PHOSPHORYLATION AT SER-79; SER-1200 AND SER-1215</scope>
</reference>
<reference key="10">
    <citation type="journal article" date="1997" name="J. Appl. Physiol.">
        <title>Phosphorylation of rat muscle acetyl-CoA carboxylase by AMP-activated protein kinase and protein kinase A.</title>
        <authorList>
            <person name="Winder W.W."/>
            <person name="Wilson H.A."/>
            <person name="Hardie D.G."/>
            <person name="Rasmussen B.B."/>
            <person name="Hutber C.A."/>
            <person name="Call G.B."/>
            <person name="Clayton R.D."/>
            <person name="Conley L.M."/>
            <person name="Yoon S."/>
            <person name="Zhou B."/>
        </authorList>
    </citation>
    <scope>PHOSPHORYLATION BY AMPK</scope>
</reference>
<reference key="11">
    <citation type="journal article" date="2006" name="J. Proteome Res.">
        <title>Phosphoproteomic analysis of rat liver by high capacity IMAC and LC-MS/MS.</title>
        <authorList>
            <person name="Moser K."/>
            <person name="White F.M."/>
        </authorList>
    </citation>
    <scope>IDENTIFICATION BY MASS SPECTROMETRY [LARGE SCALE ANALYSIS]</scope>
</reference>
<reference key="12">
    <citation type="journal article" date="2012" name="Nat. Commun.">
        <title>Quantitative maps of protein phosphorylation sites across 14 different rat organs and tissues.</title>
        <authorList>
            <person name="Lundby A."/>
            <person name="Secher A."/>
            <person name="Lage K."/>
            <person name="Nordsborg N.B."/>
            <person name="Dmytriyev A."/>
            <person name="Lundby C."/>
            <person name="Olsen J.V."/>
        </authorList>
    </citation>
    <scope>PHOSPHORYLATION [LARGE SCALE ANALYSIS] AT SER-23; SER-25; SER-29; SER-34; SER-47; SER-49; SER-79; THR-609 AND SER-1258</scope>
    <scope>IDENTIFICATION BY MASS SPECTROMETRY [LARGE SCALE ANALYSIS]</scope>
</reference>
<protein>
    <recommendedName>
        <fullName evidence="16">Acetyl-CoA carboxylase 1</fullName>
        <shortName>ACC1</shortName>
        <ecNumber evidence="2">6.4.1.2</ecNumber>
    </recommendedName>
    <alternativeName>
        <fullName>ACC-alpha</fullName>
    </alternativeName>
</protein>
<dbReference type="EC" id="6.4.1.2" evidence="2"/>
<dbReference type="EMBL" id="J03808">
    <property type="protein sequence ID" value="AAA40653.1"/>
    <property type="molecule type" value="mRNA"/>
</dbReference>
<dbReference type="EMBL" id="M26731">
    <property type="protein sequence ID" value="AAA40652.1"/>
    <property type="molecule type" value="Genomic_DNA"/>
</dbReference>
<dbReference type="EMBL" id="EF121986">
    <property type="protein sequence ID" value="ABL63425.1"/>
    <property type="molecule type" value="mRNA"/>
</dbReference>
<dbReference type="EMBL" id="EF121987">
    <property type="protein sequence ID" value="ABL63426.1"/>
    <property type="molecule type" value="mRNA"/>
</dbReference>
<dbReference type="EMBL" id="M26195">
    <property type="protein sequence ID" value="AAA40654.1"/>
    <property type="molecule type" value="mRNA"/>
</dbReference>
<dbReference type="EMBL" id="M26196">
    <property type="protein sequence ID" value="AAA40655.1"/>
    <property type="molecule type" value="mRNA"/>
</dbReference>
<dbReference type="EMBL" id="M26197">
    <property type="protein sequence ID" value="AAA40656.1"/>
    <property type="molecule type" value="mRNA"/>
</dbReference>
<dbReference type="EMBL" id="M55315">
    <property type="status" value="NOT_ANNOTATED_CDS"/>
    <property type="molecule type" value="mRNA"/>
</dbReference>
<dbReference type="PIR" id="A35578">
    <property type="entry name" value="A35578"/>
</dbReference>
<dbReference type="RefSeq" id="NP_071529.1">
    <property type="nucleotide sequence ID" value="NM_022193.1"/>
</dbReference>
<dbReference type="SMR" id="P11497"/>
<dbReference type="BioGRID" id="248868">
    <property type="interactions" value="1"/>
</dbReference>
<dbReference type="FunCoup" id="P11497">
    <property type="interactions" value="2409"/>
</dbReference>
<dbReference type="STRING" id="10116.ENSRNOP00000073421"/>
<dbReference type="BindingDB" id="P11497"/>
<dbReference type="ChEMBL" id="CHEMBL2397"/>
<dbReference type="GuidetoPHARMACOLOGY" id="1263"/>
<dbReference type="iPTMnet" id="P11497"/>
<dbReference type="PhosphoSitePlus" id="P11497"/>
<dbReference type="jPOST" id="P11497"/>
<dbReference type="PaxDb" id="10116-ENSRNOP00000049438"/>
<dbReference type="GeneID" id="60581"/>
<dbReference type="KEGG" id="rno:60581"/>
<dbReference type="AGR" id="RGD:621248"/>
<dbReference type="CTD" id="31"/>
<dbReference type="RGD" id="621248">
    <property type="gene designation" value="Acaca"/>
</dbReference>
<dbReference type="eggNOG" id="KOG0368">
    <property type="taxonomic scope" value="Eukaryota"/>
</dbReference>
<dbReference type="InParanoid" id="P11497"/>
<dbReference type="PhylomeDB" id="P11497"/>
<dbReference type="Reactome" id="R-RNO-196780">
    <property type="pathway name" value="Biotin transport and metabolism"/>
</dbReference>
<dbReference type="Reactome" id="R-RNO-200425">
    <property type="pathway name" value="Carnitine shuttle"/>
</dbReference>
<dbReference type="Reactome" id="R-RNO-75105">
    <property type="pathway name" value="Fatty acyl-CoA biosynthesis"/>
</dbReference>
<dbReference type="UniPathway" id="UPA00655">
    <property type="reaction ID" value="UER00711"/>
</dbReference>
<dbReference type="PRO" id="PR:P11497"/>
<dbReference type="Proteomes" id="UP000002494">
    <property type="component" value="Unplaced"/>
</dbReference>
<dbReference type="GO" id="GO:0005829">
    <property type="term" value="C:cytosol"/>
    <property type="evidence" value="ECO:0000250"/>
    <property type="project" value="UniProtKB"/>
</dbReference>
<dbReference type="GO" id="GO:0005739">
    <property type="term" value="C:mitochondrion"/>
    <property type="evidence" value="ECO:0000318"/>
    <property type="project" value="GO_Central"/>
</dbReference>
<dbReference type="GO" id="GO:0003989">
    <property type="term" value="F:acetyl-CoA carboxylase activity"/>
    <property type="evidence" value="ECO:0000314"/>
    <property type="project" value="CACAO"/>
</dbReference>
<dbReference type="GO" id="GO:0005524">
    <property type="term" value="F:ATP binding"/>
    <property type="evidence" value="ECO:0007669"/>
    <property type="project" value="UniProtKB-KW"/>
</dbReference>
<dbReference type="GO" id="GO:0009374">
    <property type="term" value="F:biotin binding"/>
    <property type="evidence" value="ECO:0000314"/>
    <property type="project" value="RGD"/>
</dbReference>
<dbReference type="GO" id="GO:0042802">
    <property type="term" value="F:identical protein binding"/>
    <property type="evidence" value="ECO:0000266"/>
    <property type="project" value="RGD"/>
</dbReference>
<dbReference type="GO" id="GO:0046872">
    <property type="term" value="F:metal ion binding"/>
    <property type="evidence" value="ECO:0007669"/>
    <property type="project" value="UniProtKB-KW"/>
</dbReference>
<dbReference type="GO" id="GO:0006084">
    <property type="term" value="P:acetyl-CoA metabolic process"/>
    <property type="evidence" value="ECO:0000266"/>
    <property type="project" value="RGD"/>
</dbReference>
<dbReference type="GO" id="GO:0071380">
    <property type="term" value="P:cellular response to prostaglandin E stimulus"/>
    <property type="evidence" value="ECO:0000266"/>
    <property type="project" value="RGD"/>
</dbReference>
<dbReference type="GO" id="GO:0006633">
    <property type="term" value="P:fatty acid biosynthetic process"/>
    <property type="evidence" value="ECO:0000314"/>
    <property type="project" value="RGD"/>
</dbReference>
<dbReference type="GO" id="GO:0008610">
    <property type="term" value="P:lipid biosynthetic process"/>
    <property type="evidence" value="ECO:0000266"/>
    <property type="project" value="RGD"/>
</dbReference>
<dbReference type="GO" id="GO:0055088">
    <property type="term" value="P:lipid homeostasis"/>
    <property type="evidence" value="ECO:0000266"/>
    <property type="project" value="RGD"/>
</dbReference>
<dbReference type="GO" id="GO:0006629">
    <property type="term" value="P:lipid metabolic process"/>
    <property type="evidence" value="ECO:0000266"/>
    <property type="project" value="RGD"/>
</dbReference>
<dbReference type="GO" id="GO:2001295">
    <property type="term" value="P:malonyl-CoA biosynthetic process"/>
    <property type="evidence" value="ECO:0007669"/>
    <property type="project" value="UniProtKB-UniPathway"/>
</dbReference>
<dbReference type="GO" id="GO:0051289">
    <property type="term" value="P:protein homotetramerization"/>
    <property type="evidence" value="ECO:0000250"/>
    <property type="project" value="UniProtKB"/>
</dbReference>
<dbReference type="GO" id="GO:0007584">
    <property type="term" value="P:response to nutrient"/>
    <property type="evidence" value="ECO:0000270"/>
    <property type="project" value="RGD"/>
</dbReference>
<dbReference type="GO" id="GO:0031667">
    <property type="term" value="P:response to nutrient levels"/>
    <property type="evidence" value="ECO:0000270"/>
    <property type="project" value="RGD"/>
</dbReference>
<dbReference type="GO" id="GO:0009410">
    <property type="term" value="P:response to xenobiotic stimulus"/>
    <property type="evidence" value="ECO:0000270"/>
    <property type="project" value="RGD"/>
</dbReference>
<dbReference type="GO" id="GO:0001894">
    <property type="term" value="P:tissue homeostasis"/>
    <property type="evidence" value="ECO:0000266"/>
    <property type="project" value="RGD"/>
</dbReference>
<dbReference type="CDD" id="cd06850">
    <property type="entry name" value="biotinyl_domain"/>
    <property type="match status" value="1"/>
</dbReference>
<dbReference type="FunFam" id="2.40.460.10:FF:000001">
    <property type="entry name" value="Acetyl-CoA carboxylase 1"/>
    <property type="match status" value="1"/>
</dbReference>
<dbReference type="FunFam" id="2.40.50.100:FF:000005">
    <property type="entry name" value="Acetyl-CoA carboxylase 1"/>
    <property type="match status" value="1"/>
</dbReference>
<dbReference type="FunFam" id="3.30.470.20:FF:000005">
    <property type="entry name" value="Acetyl-CoA carboxylase 1"/>
    <property type="match status" value="1"/>
</dbReference>
<dbReference type="FunFam" id="3.90.1770.10:FF:000001">
    <property type="entry name" value="acetyl-CoA carboxylase 1"/>
    <property type="match status" value="1"/>
</dbReference>
<dbReference type="FunFam" id="3.30.1490.20:FF:000003">
    <property type="entry name" value="acetyl-CoA carboxylase isoform X1"/>
    <property type="match status" value="1"/>
</dbReference>
<dbReference type="FunFam" id="3.40.50.20:FF:000005">
    <property type="entry name" value="acetyl-CoA carboxylase isoform X2"/>
    <property type="match status" value="1"/>
</dbReference>
<dbReference type="FunFam" id="3.90.226.10:FF:000010">
    <property type="entry name" value="acetyl-CoA carboxylase isoform X2"/>
    <property type="match status" value="1"/>
</dbReference>
<dbReference type="Gene3D" id="2.40.50.100">
    <property type="match status" value="1"/>
</dbReference>
<dbReference type="Gene3D" id="3.40.50.20">
    <property type="match status" value="1"/>
</dbReference>
<dbReference type="Gene3D" id="3.90.226.10">
    <property type="entry name" value="2-enoyl-CoA Hydratase, Chain A, domain 1"/>
    <property type="match status" value="2"/>
</dbReference>
<dbReference type="Gene3D" id="3.30.1490.20">
    <property type="entry name" value="ATP-grasp fold, A domain"/>
    <property type="match status" value="1"/>
</dbReference>
<dbReference type="Gene3D" id="3.30.470.20">
    <property type="entry name" value="ATP-grasp fold, B domain"/>
    <property type="match status" value="1"/>
</dbReference>
<dbReference type="Gene3D" id="2.40.460.10">
    <property type="entry name" value="Biotin dependent carboxylase carboxyltransferase"/>
    <property type="match status" value="1"/>
</dbReference>
<dbReference type="Gene3D" id="3.90.1770.10">
    <property type="entry name" value="PreATP-grasp domain"/>
    <property type="match status" value="1"/>
</dbReference>
<dbReference type="InterPro" id="IPR049076">
    <property type="entry name" value="ACCA"/>
</dbReference>
<dbReference type="InterPro" id="IPR049074">
    <property type="entry name" value="ACCA_BT"/>
</dbReference>
<dbReference type="InterPro" id="IPR034733">
    <property type="entry name" value="AcCoA_carboxyl_beta"/>
</dbReference>
<dbReference type="InterPro" id="IPR013537">
    <property type="entry name" value="AcCoA_COase_cen"/>
</dbReference>
<dbReference type="InterPro" id="IPR011761">
    <property type="entry name" value="ATP-grasp"/>
</dbReference>
<dbReference type="InterPro" id="IPR013815">
    <property type="entry name" value="ATP_grasp_subdomain_1"/>
</dbReference>
<dbReference type="InterPro" id="IPR005481">
    <property type="entry name" value="BC-like_N"/>
</dbReference>
<dbReference type="InterPro" id="IPR001882">
    <property type="entry name" value="Biotin_BS"/>
</dbReference>
<dbReference type="InterPro" id="IPR011764">
    <property type="entry name" value="Biotin_carboxylation_dom"/>
</dbReference>
<dbReference type="InterPro" id="IPR005482">
    <property type="entry name" value="Biotin_COase_C"/>
</dbReference>
<dbReference type="InterPro" id="IPR000089">
    <property type="entry name" value="Biotin_lipoyl"/>
</dbReference>
<dbReference type="InterPro" id="IPR005479">
    <property type="entry name" value="CbamoylP_synth_lsu-like_ATP-bd"/>
</dbReference>
<dbReference type="InterPro" id="IPR029045">
    <property type="entry name" value="ClpP/crotonase-like_dom_sf"/>
</dbReference>
<dbReference type="InterPro" id="IPR011763">
    <property type="entry name" value="COA_CT_C"/>
</dbReference>
<dbReference type="InterPro" id="IPR011762">
    <property type="entry name" value="COA_CT_N"/>
</dbReference>
<dbReference type="InterPro" id="IPR016185">
    <property type="entry name" value="PreATP-grasp_dom_sf"/>
</dbReference>
<dbReference type="InterPro" id="IPR011054">
    <property type="entry name" value="Rudment_hybrid_motif"/>
</dbReference>
<dbReference type="InterPro" id="IPR011053">
    <property type="entry name" value="Single_hybrid_motif"/>
</dbReference>
<dbReference type="PANTHER" id="PTHR45728:SF5">
    <property type="entry name" value="ACETYL-COA CARBOXYLASE 1"/>
    <property type="match status" value="1"/>
</dbReference>
<dbReference type="PANTHER" id="PTHR45728">
    <property type="entry name" value="ACETYL-COA CARBOXYLASE, ISOFORM A"/>
    <property type="match status" value="1"/>
</dbReference>
<dbReference type="Pfam" id="PF08326">
    <property type="entry name" value="ACC_central"/>
    <property type="match status" value="1"/>
</dbReference>
<dbReference type="Pfam" id="PF21385">
    <property type="entry name" value="ACCA_BT"/>
    <property type="match status" value="1"/>
</dbReference>
<dbReference type="Pfam" id="PF02785">
    <property type="entry name" value="Biotin_carb_C"/>
    <property type="match status" value="1"/>
</dbReference>
<dbReference type="Pfam" id="PF00289">
    <property type="entry name" value="Biotin_carb_N"/>
    <property type="match status" value="1"/>
</dbReference>
<dbReference type="Pfam" id="PF00364">
    <property type="entry name" value="Biotin_lipoyl"/>
    <property type="match status" value="1"/>
</dbReference>
<dbReference type="Pfam" id="PF01039">
    <property type="entry name" value="Carboxyl_trans"/>
    <property type="match status" value="1"/>
</dbReference>
<dbReference type="Pfam" id="PF02786">
    <property type="entry name" value="CPSase_L_D2"/>
    <property type="match status" value="1"/>
</dbReference>
<dbReference type="SMART" id="SM00878">
    <property type="entry name" value="Biotin_carb_C"/>
    <property type="match status" value="1"/>
</dbReference>
<dbReference type="SUPFAM" id="SSF52096">
    <property type="entry name" value="ClpP/crotonase"/>
    <property type="match status" value="2"/>
</dbReference>
<dbReference type="SUPFAM" id="SSF56059">
    <property type="entry name" value="Glutathione synthetase ATP-binding domain-like"/>
    <property type="match status" value="1"/>
</dbReference>
<dbReference type="SUPFAM" id="SSF52440">
    <property type="entry name" value="PreATP-grasp domain"/>
    <property type="match status" value="1"/>
</dbReference>
<dbReference type="SUPFAM" id="SSF51246">
    <property type="entry name" value="Rudiment single hybrid motif"/>
    <property type="match status" value="1"/>
</dbReference>
<dbReference type="SUPFAM" id="SSF51230">
    <property type="entry name" value="Single hybrid motif"/>
    <property type="match status" value="1"/>
</dbReference>
<dbReference type="PROSITE" id="PS50975">
    <property type="entry name" value="ATP_GRASP"/>
    <property type="match status" value="1"/>
</dbReference>
<dbReference type="PROSITE" id="PS50979">
    <property type="entry name" value="BC"/>
    <property type="match status" value="1"/>
</dbReference>
<dbReference type="PROSITE" id="PS00188">
    <property type="entry name" value="BIOTIN"/>
    <property type="match status" value="1"/>
</dbReference>
<dbReference type="PROSITE" id="PS50968">
    <property type="entry name" value="BIOTINYL_LIPOYL"/>
    <property type="match status" value="1"/>
</dbReference>
<dbReference type="PROSITE" id="PS50989">
    <property type="entry name" value="COA_CT_CTER"/>
    <property type="match status" value="1"/>
</dbReference>
<dbReference type="PROSITE" id="PS50980">
    <property type="entry name" value="COA_CT_NTER"/>
    <property type="match status" value="1"/>
</dbReference>
<dbReference type="PROSITE" id="PS00866">
    <property type="entry name" value="CPSASE_1"/>
    <property type="match status" value="1"/>
</dbReference>
<dbReference type="PROSITE" id="PS00867">
    <property type="entry name" value="CPSASE_2"/>
    <property type="match status" value="1"/>
</dbReference>
<proteinExistence type="evidence at protein level"/>
<keyword id="KW-0007">Acetylation</keyword>
<keyword id="KW-0021">Allosteric enzyme</keyword>
<keyword id="KW-0025">Alternative splicing</keyword>
<keyword id="KW-0067">ATP-binding</keyword>
<keyword id="KW-0092">Biotin</keyword>
<keyword id="KW-0963">Cytoplasm</keyword>
<keyword id="KW-0903">Direct protein sequencing</keyword>
<keyword id="KW-0275">Fatty acid biosynthesis</keyword>
<keyword id="KW-0276">Fatty acid metabolism</keyword>
<keyword id="KW-0436">Ligase</keyword>
<keyword id="KW-0444">Lipid biosynthesis</keyword>
<keyword id="KW-0443">Lipid metabolism</keyword>
<keyword id="KW-0460">Magnesium</keyword>
<keyword id="KW-0464">Manganese</keyword>
<keyword id="KW-0479">Metal-binding</keyword>
<keyword id="KW-0511">Multifunctional enzyme</keyword>
<keyword id="KW-0547">Nucleotide-binding</keyword>
<keyword id="KW-0597">Phosphoprotein</keyword>
<keyword id="KW-1185">Reference proteome</keyword>
<accession>P11497</accession>
<accession>A1EC79</accession>
<accession>P97902</accession>
<evidence type="ECO:0000250" key="1"/>
<evidence type="ECO:0000250" key="2">
    <source>
        <dbReference type="UniProtKB" id="Q13085"/>
    </source>
</evidence>
<evidence type="ECO:0000250" key="3">
    <source>
        <dbReference type="UniProtKB" id="Q5SWU9"/>
    </source>
</evidence>
<evidence type="ECO:0000255" key="4">
    <source>
        <dbReference type="PROSITE-ProRule" id="PRU00409"/>
    </source>
</evidence>
<evidence type="ECO:0000255" key="5">
    <source>
        <dbReference type="PROSITE-ProRule" id="PRU00969"/>
    </source>
</evidence>
<evidence type="ECO:0000255" key="6">
    <source>
        <dbReference type="PROSITE-ProRule" id="PRU01066"/>
    </source>
</evidence>
<evidence type="ECO:0000255" key="7">
    <source>
        <dbReference type="PROSITE-ProRule" id="PRU01136"/>
    </source>
</evidence>
<evidence type="ECO:0000255" key="8">
    <source>
        <dbReference type="PROSITE-ProRule" id="PRU01137"/>
    </source>
</evidence>
<evidence type="ECO:0000255" key="9">
    <source>
        <dbReference type="PROSITE-ProRule" id="PRU01138"/>
    </source>
</evidence>
<evidence type="ECO:0000269" key="10">
    <source>
    </source>
</evidence>
<evidence type="ECO:0000269" key="11">
    <source>
    </source>
</evidence>
<evidence type="ECO:0000269" key="12">
    <source>
    </source>
</evidence>
<evidence type="ECO:0000269" key="13">
    <source>
    </source>
</evidence>
<evidence type="ECO:0000269" key="14">
    <source>
    </source>
</evidence>
<evidence type="ECO:0000303" key="15">
    <source>
    </source>
</evidence>
<evidence type="ECO:0000305" key="16"/>
<evidence type="ECO:0000305" key="17">
    <source>
    </source>
</evidence>
<evidence type="ECO:0000312" key="18">
    <source>
        <dbReference type="RGD" id="621248"/>
    </source>
</evidence>
<evidence type="ECO:0007744" key="19">
    <source>
    </source>
</evidence>
<sequence length="2345" mass="265194">MDEPSPLAKTLELNQHSRFIIGSVSEDNSEDEISNLVKLDLEEKEGSLSPASVSSDTLSDLGISALQDGLAFHMRSSMSGLHLVKQGRDRKKIDSQRDFTVASPAEFVTRFGGNKVIEKVLIANNGIAAVKCMRSIRRWSYEMFRNERAIRFVVMVTPEDLKANAEYIKMADHYVPVPGGANNNNYANVELILDIAKRIPVQAVWAGWGHASENPKLPELLLKNGIAFMGPPSQAMWALGDKIASSIVAQTAGIPTLPWSGSGLRVDWQENDFSKRILNVPQDLYEKGYVKDVDDGLKAAEEVGYPVMIKASEGGGGKGIRKVNNADDFPNLFRQVQAEVPGSPIFVMRLAKQSRHLEVQILADQYGNAISLFGRDCSVQRRHQKIIEEAPAAIATPAVFEHMEQCAVKLAKMVGYVSAGTVEYLYSQDGSFYFLELNPRLQVEHPCTEMVADVNLPAAQLQIAMGIPLFRIKDIRMMYGVSPWGDAPIDFENSAHVPCPRGHVIAARITSENPDEGFKPSSGTVQELNFRSNKNVWGYFSVAAAGGLHEFADSQFGHCFSWGENREEAISNMVVALKELSIRGDFRTTVEYLIKLLETESFQLNRIDTGWLDRLIAEKVQAERPDTMLGVVCGALHVADVNLRNSISNFLHSLERGQVLPAHTLLNTVDVELIYEGIKYVLKVTRQSPNSYVVIMNGSCVEVDVHRLSDGGLLLSYDGSSYTTYMKEEVDRYRITIGNKTCVFEKENDPSVMRSPSAGKLIQYIVEDGGHVFAGQCYAEIEVMKMVMTLTAVESGCIHYVKRPGAALDPGCVIAKMQLDNPSKVQQAELHTGSLPQIQSTALRGEKLHRVFHYVLDNLVNVMNGYCLPDPFFSSKVKDWVERLMKTLRDPSLPLLELQDIMTSVSGRIPLNVEKSIKKEMAQYASNITSVLCQFPSQQIANILDSHAATLNRKSEREVFFMNTQSIVQLVQRYRSGIRGHMKAVVMDLLRQYLRVETQFQNGHYDKCVFALREENKSDMNTVLNYIFSHAQVTKKNLLVTMLIDQLCGRDPTLTDELLNILTELTQLSKTTNAKVALRARQVLIASHLPSYDVRHNQVESIFLSAIDMYGHQFCIENLQKLILSETSIFDVLPNFFYHSNQVVRMAALEVYVRRAYIAYELNSVQHRQLKDNTCVVEFQFMLPTSHPNRGNIPTLNRMSFASNLNHYGMTHVASVSDVLLDNAFTPPCQRMGGMVSFRTFEDFVRIFDEVMGCFCDSPPQSPTFPESGHTSLYDEDKVPRDEPIHILNVAIKTDGDIEDDRLAAMFREFTQQNKATLVEHGIRRLTFLVAQKDFRKQVNCEVDQRFHREFPKFFTFRARDKFEEDRIYRHLEPALAFQLELNRMRNFDLTAIPCANHKMHLYLGAAKVEVGTEVTDYRFFVRAIIRHSDLVTKEASFEYLQNEGERLLLEAMDELEVAFNNTNVRTDCNHIFLNFVPTVIMDPSKIEESVRSMVMRYGSRLWKLRVLQAELKINIRLTTTGKAIPIRLFLTNESGYYLDISLYKEVTDSRTAQIMFQAYGDKQGPLHGMLINTPYVTKDLLQSKRFQAQSLGTTYIYDIPEMFRQSLIKLWESMSTQAFLPSPPLPSDILTYTELVLDDQGQLVHMNRLPGGNEIGMVAWKMSLKSPEYPDGRDVIVIGNDITYRIGSFGPQEDLLFLRASELARAEGIPRIYVAANSGARIGLAEEIRHMFHVAWVDSEDPYKGYKYLYLTPQDYKRVSALNSVHCEHVEDEGESRYKITDIIGKEEGLGAENLRGSGMIAGESSLAYDEIITISLVTCRAIGIGAYLVRLGQRTIQVENSHLILTGAGALNKVLGREVYTSNNQLGGIQIMHNNGVTHCTVCDDFEGVFTVLHWLSYMPKNVHSSVPLLNSKDPIDRIIEFVPTKAPYDPRWMLAGRPHPTQKGQWLSGFFDYGSFSEIMQPWAQTVVVGRARLGGIPVGVVAVETRTVELSVPADPANLDSEAKIIQQAGQVWFPDSAFKTYQAIKDFNREGLPLMVFANWRGFSGGMKDMYDQVLKFGAYIVDGLRECSQPVMVYIPPQAELRGGSWVVIDPTINPRHMEMYADRESRGSVLEPEGTVEIKFRKKDLVKTMRRVDPVYIRLAERLGTPELSPTERKELESKLKEREEFLIPIYHQVAVQFADLHDTPGRMQEKGVINDILDWKTSRTFFYWRLRRLLLEDLVKKKIHSANPELTDGQIQAMLRRWFVEVEGTVKAYVWDNNKDLVEWLEKQLTEEDGVRSVIEENIKYISRDYVLKQIRSLVQANPEVAMDSIVHMTQHISPTQRAEVVRILSTMDSPST</sequence>
<feature type="chain" id="PRO_0000146765" description="Acetyl-CoA carboxylase 1">
    <location>
        <begin position="1"/>
        <end position="2345"/>
    </location>
</feature>
<feature type="domain" description="Biotin carboxylation" evidence="5">
    <location>
        <begin position="116"/>
        <end position="617"/>
    </location>
</feature>
<feature type="domain" description="ATP-grasp" evidence="4">
    <location>
        <begin position="274"/>
        <end position="465"/>
    </location>
</feature>
<feature type="domain" description="Biotinyl-binding" evidence="6">
    <location>
        <begin position="744"/>
        <end position="818"/>
    </location>
</feature>
<feature type="domain" description="CoA carboxyltransferase N-terminal" evidence="7">
    <location>
        <begin position="1575"/>
        <end position="1913"/>
    </location>
</feature>
<feature type="domain" description="CoA carboxyltransferase C-terminal" evidence="8">
    <location>
        <begin position="1917"/>
        <end position="2233"/>
    </location>
</feature>
<feature type="region of interest" description="Carboxyltransferase" evidence="9">
    <location>
        <begin position="1575"/>
        <end position="2233"/>
    </location>
</feature>
<feature type="active site" evidence="1">
    <location>
        <position position="440"/>
    </location>
</feature>
<feature type="binding site" evidence="4">
    <location>
        <begin position="314"/>
        <end position="319"/>
    </location>
    <ligand>
        <name>ATP</name>
        <dbReference type="ChEBI" id="CHEBI:30616"/>
    </ligand>
</feature>
<feature type="binding site" evidence="4 5">
    <location>
        <position position="423"/>
    </location>
    <ligand>
        <name>Mg(2+)</name>
        <dbReference type="ChEBI" id="CHEBI:18420"/>
        <label>1</label>
    </ligand>
</feature>
<feature type="binding site" evidence="4 5">
    <location>
        <position position="423"/>
    </location>
    <ligand>
        <name>Mn(2+)</name>
        <dbReference type="ChEBI" id="CHEBI:29035"/>
        <label>1</label>
    </ligand>
</feature>
<feature type="binding site" evidence="4 5">
    <location>
        <position position="436"/>
    </location>
    <ligand>
        <name>Mg(2+)</name>
        <dbReference type="ChEBI" id="CHEBI:18420"/>
        <label>1</label>
    </ligand>
</feature>
<feature type="binding site" evidence="4 5">
    <location>
        <position position="436"/>
    </location>
    <ligand>
        <name>Mg(2+)</name>
        <dbReference type="ChEBI" id="CHEBI:18420"/>
        <label>2</label>
    </ligand>
</feature>
<feature type="binding site" evidence="4 5">
    <location>
        <position position="436"/>
    </location>
    <ligand>
        <name>Mn(2+)</name>
        <dbReference type="ChEBI" id="CHEBI:29035"/>
        <label>1</label>
    </ligand>
</feature>
<feature type="binding site" evidence="4 5">
    <location>
        <position position="436"/>
    </location>
    <ligand>
        <name>Mn(2+)</name>
        <dbReference type="ChEBI" id="CHEBI:29035"/>
        <label>2</label>
    </ligand>
</feature>
<feature type="binding site" evidence="4 5">
    <location>
        <position position="438"/>
    </location>
    <ligand>
        <name>Mg(2+)</name>
        <dbReference type="ChEBI" id="CHEBI:18420"/>
        <label>2</label>
    </ligand>
</feature>
<feature type="binding site" evidence="4 5">
    <location>
        <position position="438"/>
    </location>
    <ligand>
        <name>Mn(2+)</name>
        <dbReference type="ChEBI" id="CHEBI:29035"/>
        <label>2</label>
    </ligand>
</feature>
<feature type="binding site" evidence="1">
    <location>
        <position position="1822"/>
    </location>
    <ligand>
        <name>CoA</name>
        <dbReference type="ChEBI" id="CHEBI:57287"/>
    </ligand>
</feature>
<feature type="binding site" evidence="1">
    <location>
        <position position="2126"/>
    </location>
    <ligand>
        <name>CoA</name>
        <dbReference type="ChEBI" id="CHEBI:57287"/>
    </ligand>
</feature>
<feature type="binding site" evidence="1">
    <location>
        <position position="2128"/>
    </location>
    <ligand>
        <name>CoA</name>
        <dbReference type="ChEBI" id="CHEBI:57287"/>
    </ligand>
</feature>
<feature type="modified residue" description="N-acetylmethionine" evidence="2">
    <location>
        <position position="1"/>
    </location>
</feature>
<feature type="modified residue" description="Phosphoserine" evidence="2">
    <location>
        <position position="5"/>
    </location>
</feature>
<feature type="modified residue" description="Phosphoserine" evidence="19">
    <location>
        <position position="23"/>
    </location>
</feature>
<feature type="modified residue" description="Phosphoserine" evidence="19">
    <location>
        <position position="25"/>
    </location>
</feature>
<feature type="modified residue" description="Phosphoserine" evidence="19">
    <location>
        <position position="29"/>
    </location>
</feature>
<feature type="modified residue" description="Phosphoserine" evidence="19">
    <location>
        <position position="34"/>
    </location>
</feature>
<feature type="modified residue" description="Phosphoserine" evidence="19">
    <location>
        <position position="47"/>
    </location>
</feature>
<feature type="modified residue" description="Phosphoserine" evidence="19">
    <location>
        <position position="49"/>
    </location>
</feature>
<feature type="modified residue" description="Phosphoserine" evidence="2">
    <location>
        <position position="52"/>
    </location>
</feature>
<feature type="modified residue" description="Phosphothreonine" evidence="3">
    <location>
        <position position="57"/>
    </location>
</feature>
<feature type="modified residue" description="Phosphoserine" evidence="13">
    <location>
        <position position="77"/>
    </location>
</feature>
<feature type="modified residue" description="Phosphoserine; by AMPK" evidence="10 13 19">
    <location>
        <position position="79"/>
    </location>
</feature>
<feature type="modified residue" description="Phosphothreonine" evidence="19">
    <location>
        <position position="609"/>
    </location>
</feature>
<feature type="modified residue" description="N6-biotinyllysine" evidence="6 12">
    <location>
        <position position="785"/>
    </location>
</feature>
<feature type="modified residue" description="Phosphoserine" evidence="2">
    <location>
        <position position="834"/>
    </location>
</feature>
<feature type="modified residue" description="Phosphoserine; by AMPK; in vitro" evidence="10 11 13">
    <location>
        <position position="1200"/>
    </location>
</feature>
<feature type="modified residue" description="Phosphoserine; by AMPK; in vitro" evidence="10">
    <location>
        <position position="1215"/>
    </location>
</feature>
<feature type="modified residue" description="Phosphoserine" evidence="3">
    <location>
        <position position="1217"/>
    </location>
</feature>
<feature type="modified residue" description="Phosphothreonine" evidence="3">
    <location>
        <position position="1226"/>
    </location>
</feature>
<feature type="modified residue" description="Phosphoserine" evidence="19">
    <location>
        <position position="1258"/>
    </location>
</feature>
<feature type="modified residue" description="Phosphoserine" evidence="2">
    <location>
        <position position="1262"/>
    </location>
</feature>
<feature type="modified residue" description="Phosphoserine" evidence="2">
    <location>
        <position position="1272"/>
    </location>
</feature>
<feature type="modified residue" description="N6-acetyllysine" evidence="2">
    <location>
        <position position="1333"/>
    </location>
</feature>
<feature type="modified residue" description="Phosphothreonine" evidence="2">
    <location>
        <position position="2152"/>
    </location>
</feature>
<feature type="splice variant" id="VSP_011753" description="In isoform 2." evidence="15">
    <location>
        <begin position="1189"/>
        <end position="1196"/>
    </location>
</feature>
<name>ACACA_RAT</name>
<comment type="function">
    <text evidence="2">Cytosolic enzyme that catalyzes the carboxylation of acetyl-CoA to malonyl-CoA, the first and rate-limiting step of de novo fatty acid biosynthesis. This is a 2 steps reaction starting with the ATP-dependent carboxylation of the biotin carried by the biotin carboxyl carrier (BCC) domain followed by the transfer of the carboxyl group from carboxylated biotin to acetyl-CoA.</text>
</comment>
<comment type="catalytic activity">
    <reaction evidence="2">
        <text>hydrogencarbonate + acetyl-CoA + ATP = malonyl-CoA + ADP + phosphate + H(+)</text>
        <dbReference type="Rhea" id="RHEA:11308"/>
        <dbReference type="ChEBI" id="CHEBI:15378"/>
        <dbReference type="ChEBI" id="CHEBI:17544"/>
        <dbReference type="ChEBI" id="CHEBI:30616"/>
        <dbReference type="ChEBI" id="CHEBI:43474"/>
        <dbReference type="ChEBI" id="CHEBI:57288"/>
        <dbReference type="ChEBI" id="CHEBI:57384"/>
        <dbReference type="ChEBI" id="CHEBI:456216"/>
        <dbReference type="EC" id="6.4.1.2"/>
    </reaction>
    <physiologicalReaction direction="left-to-right" evidence="2">
        <dbReference type="Rhea" id="RHEA:11309"/>
    </physiologicalReaction>
</comment>
<comment type="cofactor">
    <cofactor evidence="4 5">
        <name>Mg(2+)</name>
        <dbReference type="ChEBI" id="CHEBI:18420"/>
    </cofactor>
    <cofactor evidence="4 5">
        <name>Mn(2+)</name>
        <dbReference type="ChEBI" id="CHEBI:29035"/>
    </cofactor>
    <text evidence="4 5">Binds 2 magnesium or manganese ions per subunit.</text>
</comment>
<comment type="cofactor">
    <cofactor evidence="6 17">
        <name>biotin</name>
        <dbReference type="ChEBI" id="CHEBI:57586"/>
    </cofactor>
</comment>
<comment type="activity regulation">
    <text evidence="2">Inhibited by phosphorylation (By similarity). Citrate promotes oligomerization of the protein into filaments that correspond to the most active form of the carboxylase (By similarity).</text>
</comment>
<comment type="pathway">
    <text evidence="2">Lipid metabolism; malonyl-CoA biosynthesis; malonyl-CoA from acetyl-CoA: step 1/1.</text>
</comment>
<comment type="subunit">
    <text evidence="2">Monomer, homodimer, and homotetramer. Can form filamentous polymers. Interacts in its inactive phosphorylated form with the BRCT domains of BRCA1 which prevents ACACA dephosphorylation and inhibits lipid synthesis. Interacts with MID1IP1; interaction with MID1IP1 promotes oligomerization and increases its activity.</text>
</comment>
<comment type="subcellular location">
    <subcellularLocation>
        <location evidence="3">Cytoplasm</location>
        <location evidence="3">Cytosol</location>
    </subcellularLocation>
</comment>
<comment type="alternative products">
    <event type="alternative splicing"/>
    <isoform>
        <id>P11497-1</id>
        <name>1</name>
        <sequence type="displayed"/>
    </isoform>
    <isoform>
        <id>P11497-2</id>
        <name>2</name>
        <sequence type="described" ref="VSP_011753"/>
    </isoform>
</comment>
<comment type="domain">
    <text evidence="2">Consists of an N-terminal biotin carboxylation/carboxylase (BC) domain that catalyzes the ATP-dependent transient carboxylation of the biotin covalently attached to the central biotinyl-binding/biotin carboxyl carrier (BCC) domain. The C-terminal carboxyl transferase (CT) domain catalyzes the transfer of the carboxyl group from carboxylated biotin to acetyl-CoA to produce malonyl-CoA.</text>
</comment>
<comment type="PTM">
    <text>The N-terminus is blocked.</text>
</comment>
<comment type="PTM">
    <text evidence="1">Phosphorylation on Ser-1262 is required for interaction with BRCA1.</text>
</comment>
<comment type="PTM">
    <text evidence="10 11 13 14">Phosphorylation at Ser-79 by AMPK inactivates enzyme activity. Phosphorylated in vitro at Ser-1200 and Ser-1215 by AMPK; the relevance of phosphorylation of these sites in vivo is however unclear.</text>
</comment>
<comment type="PTM">
    <text evidence="17">The biotin cofactor is covalently attached to the central biotinyl-binding domain and is required for the catalytic activity.</text>
</comment>
<gene>
    <name evidence="18" type="primary">Acaca</name>
    <name type="synonym">Acac</name>
</gene>
<organism>
    <name type="scientific">Rattus norvegicus</name>
    <name type="common">Rat</name>
    <dbReference type="NCBI Taxonomy" id="10116"/>
    <lineage>
        <taxon>Eukaryota</taxon>
        <taxon>Metazoa</taxon>
        <taxon>Chordata</taxon>
        <taxon>Craniata</taxon>
        <taxon>Vertebrata</taxon>
        <taxon>Euteleostomi</taxon>
        <taxon>Mammalia</taxon>
        <taxon>Eutheria</taxon>
        <taxon>Euarchontoglires</taxon>
        <taxon>Glires</taxon>
        <taxon>Rodentia</taxon>
        <taxon>Myomorpha</taxon>
        <taxon>Muroidea</taxon>
        <taxon>Muridae</taxon>
        <taxon>Murinae</taxon>
        <taxon>Rattus</taxon>
    </lineage>
</organism>